<proteinExistence type="inferred from homology"/>
<protein>
    <recommendedName>
        <fullName evidence="1">Malate dehydrogenase</fullName>
        <ecNumber evidence="1">1.1.1.37</ecNumber>
    </recommendedName>
</protein>
<name>MDH_HISS1</name>
<reference key="1">
    <citation type="journal article" date="2007" name="J. Bacteriol.">
        <title>Complete genome sequence of Haemophilus somnus (Histophilus somni) strain 129Pt and comparison to Haemophilus ducreyi 35000HP and Haemophilus influenzae Rd.</title>
        <authorList>
            <person name="Challacombe J.F."/>
            <person name="Duncan A.J."/>
            <person name="Brettin T.S."/>
            <person name="Bruce D."/>
            <person name="Chertkov O."/>
            <person name="Detter J.C."/>
            <person name="Han C.S."/>
            <person name="Misra M."/>
            <person name="Richardson P."/>
            <person name="Tapia R."/>
            <person name="Thayer N."/>
            <person name="Xie G."/>
            <person name="Inzana T.J."/>
        </authorList>
    </citation>
    <scope>NUCLEOTIDE SEQUENCE [LARGE SCALE GENOMIC DNA]</scope>
    <source>
        <strain>129Pt</strain>
    </source>
</reference>
<evidence type="ECO:0000255" key="1">
    <source>
        <dbReference type="HAMAP-Rule" id="MF_01516"/>
    </source>
</evidence>
<comment type="function">
    <text evidence="1">Catalyzes the reversible oxidation of malate to oxaloacetate.</text>
</comment>
<comment type="catalytic activity">
    <reaction evidence="1">
        <text>(S)-malate + NAD(+) = oxaloacetate + NADH + H(+)</text>
        <dbReference type="Rhea" id="RHEA:21432"/>
        <dbReference type="ChEBI" id="CHEBI:15378"/>
        <dbReference type="ChEBI" id="CHEBI:15589"/>
        <dbReference type="ChEBI" id="CHEBI:16452"/>
        <dbReference type="ChEBI" id="CHEBI:57540"/>
        <dbReference type="ChEBI" id="CHEBI:57945"/>
        <dbReference type="EC" id="1.1.1.37"/>
    </reaction>
</comment>
<comment type="subunit">
    <text evidence="1">Homodimer.</text>
</comment>
<comment type="similarity">
    <text evidence="1">Belongs to the LDH/MDH superfamily. MDH type 1 family.</text>
</comment>
<organism>
    <name type="scientific">Histophilus somni (strain 129Pt)</name>
    <name type="common">Haemophilus somnus</name>
    <dbReference type="NCBI Taxonomy" id="205914"/>
    <lineage>
        <taxon>Bacteria</taxon>
        <taxon>Pseudomonadati</taxon>
        <taxon>Pseudomonadota</taxon>
        <taxon>Gammaproteobacteria</taxon>
        <taxon>Pasteurellales</taxon>
        <taxon>Pasteurellaceae</taxon>
        <taxon>Histophilus</taxon>
    </lineage>
</organism>
<gene>
    <name evidence="1" type="primary">mdh</name>
    <name type="ordered locus">HS_1055</name>
</gene>
<accession>Q0I491</accession>
<keyword id="KW-0520">NAD</keyword>
<keyword id="KW-0560">Oxidoreductase</keyword>
<keyword id="KW-0816">Tricarboxylic acid cycle</keyword>
<dbReference type="EC" id="1.1.1.37" evidence="1"/>
<dbReference type="EMBL" id="CP000436">
    <property type="protein sequence ID" value="ABI25330.1"/>
    <property type="molecule type" value="Genomic_DNA"/>
</dbReference>
<dbReference type="SMR" id="Q0I491"/>
<dbReference type="KEGG" id="hso:HS_1055"/>
<dbReference type="eggNOG" id="COG0039">
    <property type="taxonomic scope" value="Bacteria"/>
</dbReference>
<dbReference type="HOGENOM" id="CLU_047181_1_0_6"/>
<dbReference type="GO" id="GO:0005737">
    <property type="term" value="C:cytoplasm"/>
    <property type="evidence" value="ECO:0007669"/>
    <property type="project" value="TreeGrafter"/>
</dbReference>
<dbReference type="GO" id="GO:0030060">
    <property type="term" value="F:L-malate dehydrogenase (NAD+) activity"/>
    <property type="evidence" value="ECO:0007669"/>
    <property type="project" value="UniProtKB-UniRule"/>
</dbReference>
<dbReference type="GO" id="GO:0006108">
    <property type="term" value="P:malate metabolic process"/>
    <property type="evidence" value="ECO:0007669"/>
    <property type="project" value="InterPro"/>
</dbReference>
<dbReference type="GO" id="GO:0006099">
    <property type="term" value="P:tricarboxylic acid cycle"/>
    <property type="evidence" value="ECO:0007669"/>
    <property type="project" value="UniProtKB-UniRule"/>
</dbReference>
<dbReference type="CDD" id="cd01337">
    <property type="entry name" value="MDH_glyoxysomal_mitochondrial"/>
    <property type="match status" value="1"/>
</dbReference>
<dbReference type="FunFam" id="3.40.50.720:FF:000017">
    <property type="entry name" value="Malate dehydrogenase"/>
    <property type="match status" value="1"/>
</dbReference>
<dbReference type="FunFam" id="3.90.110.10:FF:000001">
    <property type="entry name" value="Malate dehydrogenase"/>
    <property type="match status" value="1"/>
</dbReference>
<dbReference type="Gene3D" id="3.90.110.10">
    <property type="entry name" value="Lactate dehydrogenase/glycoside hydrolase, family 4, C-terminal"/>
    <property type="match status" value="1"/>
</dbReference>
<dbReference type="Gene3D" id="3.40.50.720">
    <property type="entry name" value="NAD(P)-binding Rossmann-like Domain"/>
    <property type="match status" value="1"/>
</dbReference>
<dbReference type="HAMAP" id="MF_01516">
    <property type="entry name" value="Malate_dehydrog_1"/>
    <property type="match status" value="1"/>
</dbReference>
<dbReference type="InterPro" id="IPR001557">
    <property type="entry name" value="L-lactate/malate_DH"/>
</dbReference>
<dbReference type="InterPro" id="IPR022383">
    <property type="entry name" value="Lactate/malate_DH_C"/>
</dbReference>
<dbReference type="InterPro" id="IPR001236">
    <property type="entry name" value="Lactate/malate_DH_N"/>
</dbReference>
<dbReference type="InterPro" id="IPR015955">
    <property type="entry name" value="Lactate_DH/Glyco_Ohase_4_C"/>
</dbReference>
<dbReference type="InterPro" id="IPR001252">
    <property type="entry name" value="Malate_DH_AS"/>
</dbReference>
<dbReference type="InterPro" id="IPR010097">
    <property type="entry name" value="Malate_DH_type1"/>
</dbReference>
<dbReference type="InterPro" id="IPR023958">
    <property type="entry name" value="Malate_DH_type1_bac"/>
</dbReference>
<dbReference type="InterPro" id="IPR036291">
    <property type="entry name" value="NAD(P)-bd_dom_sf"/>
</dbReference>
<dbReference type="NCBIfam" id="TIGR01772">
    <property type="entry name" value="MDH_euk_gproteo"/>
    <property type="match status" value="1"/>
</dbReference>
<dbReference type="PANTHER" id="PTHR11540">
    <property type="entry name" value="MALATE AND LACTATE DEHYDROGENASE"/>
    <property type="match status" value="1"/>
</dbReference>
<dbReference type="PANTHER" id="PTHR11540:SF16">
    <property type="entry name" value="MALATE DEHYDROGENASE, MITOCHONDRIAL"/>
    <property type="match status" value="1"/>
</dbReference>
<dbReference type="Pfam" id="PF02866">
    <property type="entry name" value="Ldh_1_C"/>
    <property type="match status" value="1"/>
</dbReference>
<dbReference type="Pfam" id="PF00056">
    <property type="entry name" value="Ldh_1_N"/>
    <property type="match status" value="1"/>
</dbReference>
<dbReference type="PIRSF" id="PIRSF000102">
    <property type="entry name" value="Lac_mal_DH"/>
    <property type="match status" value="1"/>
</dbReference>
<dbReference type="SUPFAM" id="SSF56327">
    <property type="entry name" value="LDH C-terminal domain-like"/>
    <property type="match status" value="1"/>
</dbReference>
<dbReference type="SUPFAM" id="SSF51735">
    <property type="entry name" value="NAD(P)-binding Rossmann-fold domains"/>
    <property type="match status" value="1"/>
</dbReference>
<dbReference type="PROSITE" id="PS00068">
    <property type="entry name" value="MDH"/>
    <property type="match status" value="1"/>
</dbReference>
<sequence length="311" mass="32543">MKIAVLGAAGGIGQALALLLKLQLPAGSELSLYDIAPVTPGVAADVSHIPTAVKIQGFAGEDPTPALENADVVLISAGVARKPGMDRSDLFNINAGIVKNLIEKVAKTCPKACVGIITNPVNTTVAIAAEVLKKAGVYDKRKLFGVTTLDVLRSETFVAELKGLNVSRIAVPVIGGHSGVTILPLLSQVQYAEWEEDEIAPLTKRIQNAGTEVVEAKAGGGSATLSMAQAAARFALSLVQGLSGETVVECTYVEGDGKYARFFAQPVRLGKEGVEEILPVGTLSAFEQKALEDMLPTLRADIELGEKFVNN</sequence>
<feature type="chain" id="PRO_0000294296" description="Malate dehydrogenase">
    <location>
        <begin position="1"/>
        <end position="311"/>
    </location>
</feature>
<feature type="active site" description="Proton acceptor" evidence="1">
    <location>
        <position position="177"/>
    </location>
</feature>
<feature type="binding site" evidence="1">
    <location>
        <begin position="7"/>
        <end position="13"/>
    </location>
    <ligand>
        <name>NAD(+)</name>
        <dbReference type="ChEBI" id="CHEBI:57540"/>
    </ligand>
</feature>
<feature type="binding site" evidence="1">
    <location>
        <position position="34"/>
    </location>
    <ligand>
        <name>NAD(+)</name>
        <dbReference type="ChEBI" id="CHEBI:57540"/>
    </ligand>
</feature>
<feature type="binding site" evidence="1">
    <location>
        <position position="81"/>
    </location>
    <ligand>
        <name>substrate</name>
    </ligand>
</feature>
<feature type="binding site" evidence="1">
    <location>
        <position position="87"/>
    </location>
    <ligand>
        <name>substrate</name>
    </ligand>
</feature>
<feature type="binding site" evidence="1">
    <location>
        <position position="94"/>
    </location>
    <ligand>
        <name>NAD(+)</name>
        <dbReference type="ChEBI" id="CHEBI:57540"/>
    </ligand>
</feature>
<feature type="binding site" evidence="1">
    <location>
        <begin position="117"/>
        <end position="119"/>
    </location>
    <ligand>
        <name>NAD(+)</name>
        <dbReference type="ChEBI" id="CHEBI:57540"/>
    </ligand>
</feature>
<feature type="binding site" evidence="1">
    <location>
        <position position="119"/>
    </location>
    <ligand>
        <name>substrate</name>
    </ligand>
</feature>
<feature type="binding site" evidence="1">
    <location>
        <position position="153"/>
    </location>
    <ligand>
        <name>substrate</name>
    </ligand>
</feature>
<feature type="binding site" evidence="1">
    <location>
        <position position="227"/>
    </location>
    <ligand>
        <name>NAD(+)</name>
        <dbReference type="ChEBI" id="CHEBI:57540"/>
    </ligand>
</feature>